<comment type="function">
    <text evidence="2">Oxidoreductase involved in lignan biosynthesis. Catalyzes the NADPH-dependent reduction of phenylcoumaran benzylic ethers. Converts dehydrodiconiferyl alcohol (DDC) to isodihydrodehydrodiconiferyl alcohol (IDDDC), and dihydrodehydrodiconiferyl alcohol (DDDC) to tetrahydrodehydrodiconiferyl alcohol (TDDC). Plays an important role in the biosynthesis of secondary metabolites. In addition to the 8-5'-linked neolignan DDC, can reduce the 8-8'-linked lignans, pinoresinol, and lariciresinol, but with lower activities.</text>
</comment>
<comment type="catalytic activity">
    <reaction evidence="2">
        <text>(-)-dehydrodiconiferyl alcohol + NADPH + H(+) = (S)-isodihydrodehydrodiconiferyl alcohol + NADP(+)</text>
        <dbReference type="Rhea" id="RHEA:59440"/>
        <dbReference type="ChEBI" id="CHEBI:15378"/>
        <dbReference type="ChEBI" id="CHEBI:57783"/>
        <dbReference type="ChEBI" id="CHEBI:58349"/>
        <dbReference type="ChEBI" id="CHEBI:70467"/>
        <dbReference type="ChEBI" id="CHEBI:143259"/>
    </reaction>
</comment>
<comment type="catalytic activity">
    <reaction evidence="2">
        <text>(+)-dehydrodiconiferyl alcohol + NADPH + H(+) = (R)-isodihydrodehydrodiconiferyl alcohol + NADP(+)</text>
        <dbReference type="Rhea" id="RHEA:59844"/>
        <dbReference type="ChEBI" id="CHEBI:15378"/>
        <dbReference type="ChEBI" id="CHEBI:57783"/>
        <dbReference type="ChEBI" id="CHEBI:58349"/>
        <dbReference type="ChEBI" id="CHEBI:143256"/>
        <dbReference type="ChEBI" id="CHEBI:143260"/>
    </reaction>
</comment>
<comment type="catalytic activity">
    <reaction evidence="2">
        <text>(2R,3S)-dihydrodehydrodiconiferyl alcohol + NADPH + H(+) = (S)-tetrahydrodehydrodiconiferyl alcohol + NADP(+)</text>
        <dbReference type="Rhea" id="RHEA:59848"/>
        <dbReference type="ChEBI" id="CHEBI:15378"/>
        <dbReference type="ChEBI" id="CHEBI:57783"/>
        <dbReference type="ChEBI" id="CHEBI:58349"/>
        <dbReference type="ChEBI" id="CHEBI:143258"/>
        <dbReference type="ChEBI" id="CHEBI:143262"/>
    </reaction>
</comment>
<comment type="catalytic activity">
    <reaction evidence="2">
        <text>(2S,3R)-dihydrodehydrodiconiferyl alcohol + NADPH + H(+) = (R)-tetrahydrodehydrodiconiferyl alcohol + NADP(+)</text>
        <dbReference type="Rhea" id="RHEA:59852"/>
        <dbReference type="ChEBI" id="CHEBI:15378"/>
        <dbReference type="ChEBI" id="CHEBI:57783"/>
        <dbReference type="ChEBI" id="CHEBI:58349"/>
        <dbReference type="ChEBI" id="CHEBI:143257"/>
        <dbReference type="ChEBI" id="CHEBI:143263"/>
    </reaction>
</comment>
<comment type="biophysicochemical properties">
    <kinetics>
        <KM evidence="2">0.33 mM for dehydrodiconiferyl alcohol</KM>
        <KM evidence="2">0.68 mM for pinoresinol</KM>
        <Vmax evidence="2">12.1 nmol/min/mg enzyme toward dehydrodiconiferyl alcohol</Vmax>
        <Vmax evidence="2">0.67 nmol/min/mg enzyme toward pinoresinol</Vmax>
    </kinetics>
</comment>
<comment type="tissue specificity">
    <text evidence="2">Expressed in apical meristem and cotyledon veins of young seedlings. Expressed in vascular tissues of roots, leaves, stems and petals. Expressed in pollen grains. Expressed at low levels in cauline leaves and siliques.</text>
</comment>
<comment type="induction">
    <text evidence="2">Induced by wounding.</text>
</comment>
<comment type="similarity">
    <text evidence="4">Belongs to the NmrA-type oxidoreductase family. Isoflavone reductase subfamily.</text>
</comment>
<gene>
    <name evidence="3" type="primary">PCBER1</name>
    <name evidence="5" type="ordered locus">At4g39230</name>
    <name evidence="6" type="ORF">T22F8.130</name>
</gene>
<accession>Q9T030</accession>
<accession>Q8RXS0</accession>
<name>PBER1_ARATH</name>
<organism>
    <name type="scientific">Arabidopsis thaliana</name>
    <name type="common">Mouse-ear cress</name>
    <dbReference type="NCBI Taxonomy" id="3702"/>
    <lineage>
        <taxon>Eukaryota</taxon>
        <taxon>Viridiplantae</taxon>
        <taxon>Streptophyta</taxon>
        <taxon>Embryophyta</taxon>
        <taxon>Tracheophyta</taxon>
        <taxon>Spermatophyta</taxon>
        <taxon>Magnoliopsida</taxon>
        <taxon>eudicotyledons</taxon>
        <taxon>Gunneridae</taxon>
        <taxon>Pentapetalae</taxon>
        <taxon>rosids</taxon>
        <taxon>malvids</taxon>
        <taxon>Brassicales</taxon>
        <taxon>Brassicaceae</taxon>
        <taxon>Camelineae</taxon>
        <taxon>Arabidopsis</taxon>
    </lineage>
</organism>
<sequence length="308" mass="34072">MTSKSKILFIGGTGYIGKYIVEASARSGHPTLVLVRNSTLTSPSRSSTIENFKNLGVQFLLGDLDDHTSLVNSIKQADVVISTVGHSLLGHQYKIISAIKEAGNVKRFFPSEFGNDVDRVFTVEPAKSAYATKAKIRRTIEAEGIPYTYVSCNFFAGYFLPTLAQPGATSAPRDKVIVLGDGNPKAVFNKEEDIGTYTINAVDDPRTLNKILYIRPPMNTYSFNDLVSLWENKIGKTLERIYVPEEQLLKQIIESSPPLNVMLSLCHCVFVKGGHTSFEIEPSFGVEASELYPDVKYTTVDEILNQYV</sequence>
<protein>
    <recommendedName>
        <fullName evidence="3">Phenylcoumaran benzylic ether reductase 1</fullName>
        <shortName evidence="3">AtPCBER1</shortName>
        <ecNumber evidence="2">1.23.1.-</ecNumber>
    </recommendedName>
</protein>
<proteinExistence type="evidence at protein level"/>
<evidence type="ECO:0000250" key="1">
    <source>
        <dbReference type="UniProtKB" id="Q9LD14"/>
    </source>
</evidence>
<evidence type="ECO:0000269" key="2">
    <source>
    </source>
</evidence>
<evidence type="ECO:0000303" key="3">
    <source>
    </source>
</evidence>
<evidence type="ECO:0000305" key="4"/>
<evidence type="ECO:0000312" key="5">
    <source>
        <dbReference type="Araport" id="AT4G39230"/>
    </source>
</evidence>
<evidence type="ECO:0000312" key="6">
    <source>
        <dbReference type="EMBL" id="CAB43638.1"/>
    </source>
</evidence>
<reference key="1">
    <citation type="journal article" date="1999" name="Nature">
        <title>Sequence and analysis of chromosome 4 of the plant Arabidopsis thaliana.</title>
        <authorList>
            <person name="Mayer K.F.X."/>
            <person name="Schueller C."/>
            <person name="Wambutt R."/>
            <person name="Murphy G."/>
            <person name="Volckaert G."/>
            <person name="Pohl T."/>
            <person name="Duesterhoeft A."/>
            <person name="Stiekema W."/>
            <person name="Entian K.-D."/>
            <person name="Terryn N."/>
            <person name="Harris B."/>
            <person name="Ansorge W."/>
            <person name="Brandt P."/>
            <person name="Grivell L.A."/>
            <person name="Rieger M."/>
            <person name="Weichselgartner M."/>
            <person name="de Simone V."/>
            <person name="Obermaier B."/>
            <person name="Mache R."/>
            <person name="Mueller M."/>
            <person name="Kreis M."/>
            <person name="Delseny M."/>
            <person name="Puigdomenech P."/>
            <person name="Watson M."/>
            <person name="Schmidtheini T."/>
            <person name="Reichert B."/>
            <person name="Portetelle D."/>
            <person name="Perez-Alonso M."/>
            <person name="Boutry M."/>
            <person name="Bancroft I."/>
            <person name="Vos P."/>
            <person name="Hoheisel J."/>
            <person name="Zimmermann W."/>
            <person name="Wedler H."/>
            <person name="Ridley P."/>
            <person name="Langham S.-A."/>
            <person name="McCullagh B."/>
            <person name="Bilham L."/>
            <person name="Robben J."/>
            <person name="van der Schueren J."/>
            <person name="Grymonprez B."/>
            <person name="Chuang Y.-J."/>
            <person name="Vandenbussche F."/>
            <person name="Braeken M."/>
            <person name="Weltjens I."/>
            <person name="Voet M."/>
            <person name="Bastiaens I."/>
            <person name="Aert R."/>
            <person name="Defoor E."/>
            <person name="Weitzenegger T."/>
            <person name="Bothe G."/>
            <person name="Ramsperger U."/>
            <person name="Hilbert H."/>
            <person name="Braun M."/>
            <person name="Holzer E."/>
            <person name="Brandt A."/>
            <person name="Peters S."/>
            <person name="van Staveren M."/>
            <person name="Dirkse W."/>
            <person name="Mooijman P."/>
            <person name="Klein Lankhorst R."/>
            <person name="Rose M."/>
            <person name="Hauf J."/>
            <person name="Koetter P."/>
            <person name="Berneiser S."/>
            <person name="Hempel S."/>
            <person name="Feldpausch M."/>
            <person name="Lamberth S."/>
            <person name="Van den Daele H."/>
            <person name="De Keyser A."/>
            <person name="Buysshaert C."/>
            <person name="Gielen J."/>
            <person name="Villarroel R."/>
            <person name="De Clercq R."/>
            <person name="van Montagu M."/>
            <person name="Rogers J."/>
            <person name="Cronin A."/>
            <person name="Quail M.A."/>
            <person name="Bray-Allen S."/>
            <person name="Clark L."/>
            <person name="Doggett J."/>
            <person name="Hall S."/>
            <person name="Kay M."/>
            <person name="Lennard N."/>
            <person name="McLay K."/>
            <person name="Mayes R."/>
            <person name="Pettett A."/>
            <person name="Rajandream M.A."/>
            <person name="Lyne M."/>
            <person name="Benes V."/>
            <person name="Rechmann S."/>
            <person name="Borkova D."/>
            <person name="Bloecker H."/>
            <person name="Scharfe M."/>
            <person name="Grimm M."/>
            <person name="Loehnert T.-H."/>
            <person name="Dose S."/>
            <person name="de Haan M."/>
            <person name="Maarse A.C."/>
            <person name="Schaefer M."/>
            <person name="Mueller-Auer S."/>
            <person name="Gabel C."/>
            <person name="Fuchs M."/>
            <person name="Fartmann B."/>
            <person name="Granderath K."/>
            <person name="Dauner D."/>
            <person name="Herzl A."/>
            <person name="Neumann S."/>
            <person name="Argiriou A."/>
            <person name="Vitale D."/>
            <person name="Liguori R."/>
            <person name="Piravandi E."/>
            <person name="Massenet O."/>
            <person name="Quigley F."/>
            <person name="Clabauld G."/>
            <person name="Muendlein A."/>
            <person name="Felber R."/>
            <person name="Schnabl S."/>
            <person name="Hiller R."/>
            <person name="Schmidt W."/>
            <person name="Lecharny A."/>
            <person name="Aubourg S."/>
            <person name="Chefdor F."/>
            <person name="Cooke R."/>
            <person name="Berger C."/>
            <person name="Monfort A."/>
            <person name="Casacuberta E."/>
            <person name="Gibbons T."/>
            <person name="Weber N."/>
            <person name="Vandenbol M."/>
            <person name="Bargues M."/>
            <person name="Terol J."/>
            <person name="Torres A."/>
            <person name="Perez-Perez A."/>
            <person name="Purnelle B."/>
            <person name="Bent E."/>
            <person name="Johnson S."/>
            <person name="Tacon D."/>
            <person name="Jesse T."/>
            <person name="Heijnen L."/>
            <person name="Schwarz S."/>
            <person name="Scholler P."/>
            <person name="Heber S."/>
            <person name="Francs P."/>
            <person name="Bielke C."/>
            <person name="Frishman D."/>
            <person name="Haase D."/>
            <person name="Lemcke K."/>
            <person name="Mewes H.-W."/>
            <person name="Stocker S."/>
            <person name="Zaccaria P."/>
            <person name="Bevan M."/>
            <person name="Wilson R.K."/>
            <person name="de la Bastide M."/>
            <person name="Habermann K."/>
            <person name="Parnell L."/>
            <person name="Dedhia N."/>
            <person name="Gnoj L."/>
            <person name="Schutz K."/>
            <person name="Huang E."/>
            <person name="Spiegel L."/>
            <person name="Sekhon M."/>
            <person name="Murray J."/>
            <person name="Sheet P."/>
            <person name="Cordes M."/>
            <person name="Abu-Threideh J."/>
            <person name="Stoneking T."/>
            <person name="Kalicki J."/>
            <person name="Graves T."/>
            <person name="Harmon G."/>
            <person name="Edwards J."/>
            <person name="Latreille P."/>
            <person name="Courtney L."/>
            <person name="Cloud J."/>
            <person name="Abbott A."/>
            <person name="Scott K."/>
            <person name="Johnson D."/>
            <person name="Minx P."/>
            <person name="Bentley D."/>
            <person name="Fulton B."/>
            <person name="Miller N."/>
            <person name="Greco T."/>
            <person name="Kemp K."/>
            <person name="Kramer J."/>
            <person name="Fulton L."/>
            <person name="Mardis E."/>
            <person name="Dante M."/>
            <person name="Pepin K."/>
            <person name="Hillier L.W."/>
            <person name="Nelson J."/>
            <person name="Spieth J."/>
            <person name="Ryan E."/>
            <person name="Andrews S."/>
            <person name="Geisel C."/>
            <person name="Layman D."/>
            <person name="Du H."/>
            <person name="Ali J."/>
            <person name="Berghoff A."/>
            <person name="Jones K."/>
            <person name="Drone K."/>
            <person name="Cotton M."/>
            <person name="Joshu C."/>
            <person name="Antonoiu B."/>
            <person name="Zidanic M."/>
            <person name="Strong C."/>
            <person name="Sun H."/>
            <person name="Lamar B."/>
            <person name="Yordan C."/>
            <person name="Ma P."/>
            <person name="Zhong J."/>
            <person name="Preston R."/>
            <person name="Vil D."/>
            <person name="Shekher M."/>
            <person name="Matero A."/>
            <person name="Shah R."/>
            <person name="Swaby I.K."/>
            <person name="O'Shaughnessy A."/>
            <person name="Rodriguez M."/>
            <person name="Hoffman J."/>
            <person name="Till S."/>
            <person name="Granat S."/>
            <person name="Shohdy N."/>
            <person name="Hasegawa A."/>
            <person name="Hameed A."/>
            <person name="Lodhi M."/>
            <person name="Johnson A."/>
            <person name="Chen E."/>
            <person name="Marra M.A."/>
            <person name="Martienssen R."/>
            <person name="McCombie W.R."/>
        </authorList>
    </citation>
    <scope>NUCLEOTIDE SEQUENCE [LARGE SCALE GENOMIC DNA]</scope>
    <source>
        <strain>cv. Columbia</strain>
    </source>
</reference>
<reference key="2">
    <citation type="journal article" date="2017" name="Plant J.">
        <title>Araport11: a complete reannotation of the Arabidopsis thaliana reference genome.</title>
        <authorList>
            <person name="Cheng C.Y."/>
            <person name="Krishnakumar V."/>
            <person name="Chan A.P."/>
            <person name="Thibaud-Nissen F."/>
            <person name="Schobel S."/>
            <person name="Town C.D."/>
        </authorList>
    </citation>
    <scope>GENOME REANNOTATION</scope>
    <source>
        <strain>cv. Columbia</strain>
    </source>
</reference>
<reference key="3">
    <citation type="journal article" date="2003" name="Science">
        <title>Empirical analysis of transcriptional activity in the Arabidopsis genome.</title>
        <authorList>
            <person name="Yamada K."/>
            <person name="Lim J."/>
            <person name="Dale J.M."/>
            <person name="Chen H."/>
            <person name="Shinn P."/>
            <person name="Palm C.J."/>
            <person name="Southwick A.M."/>
            <person name="Wu H.C."/>
            <person name="Kim C.J."/>
            <person name="Nguyen M."/>
            <person name="Pham P.K."/>
            <person name="Cheuk R.F."/>
            <person name="Karlin-Newmann G."/>
            <person name="Liu S.X."/>
            <person name="Lam B."/>
            <person name="Sakano H."/>
            <person name="Wu T."/>
            <person name="Yu G."/>
            <person name="Miranda M."/>
            <person name="Quach H.L."/>
            <person name="Tripp M."/>
            <person name="Chang C.H."/>
            <person name="Lee J.M."/>
            <person name="Toriumi M.J."/>
            <person name="Chan M.M."/>
            <person name="Tang C.C."/>
            <person name="Onodera C.S."/>
            <person name="Deng J.M."/>
            <person name="Akiyama K."/>
            <person name="Ansari Y."/>
            <person name="Arakawa T."/>
            <person name="Banh J."/>
            <person name="Banno F."/>
            <person name="Bowser L."/>
            <person name="Brooks S.Y."/>
            <person name="Carninci P."/>
            <person name="Chao Q."/>
            <person name="Choy N."/>
            <person name="Enju A."/>
            <person name="Goldsmith A.D."/>
            <person name="Gurjal M."/>
            <person name="Hansen N.F."/>
            <person name="Hayashizaki Y."/>
            <person name="Johnson-Hopson C."/>
            <person name="Hsuan V.W."/>
            <person name="Iida K."/>
            <person name="Karnes M."/>
            <person name="Khan S."/>
            <person name="Koesema E."/>
            <person name="Ishida J."/>
            <person name="Jiang P.X."/>
            <person name="Jones T."/>
            <person name="Kawai J."/>
            <person name="Kamiya A."/>
            <person name="Meyers C."/>
            <person name="Nakajima M."/>
            <person name="Narusaka M."/>
            <person name="Seki M."/>
            <person name="Sakurai T."/>
            <person name="Satou M."/>
            <person name="Tamse R."/>
            <person name="Vaysberg M."/>
            <person name="Wallender E.K."/>
            <person name="Wong C."/>
            <person name="Yamamura Y."/>
            <person name="Yuan S."/>
            <person name="Shinozaki K."/>
            <person name="Davis R.W."/>
            <person name="Theologis A."/>
            <person name="Ecker J.R."/>
        </authorList>
    </citation>
    <scope>NUCLEOTIDE SEQUENCE [LARGE SCALE MRNA]</scope>
    <source>
        <strain>cv. Columbia</strain>
    </source>
</reference>
<reference key="4">
    <citation type="journal article" date="2016" name="Plant Cell Rep.">
        <title>Expression and functional analyses of a putative phenylcoumaran benzylic ether reductase in Arabidopsis thaliana.</title>
        <authorList>
            <person name="Nuoendagula X."/>
            <person name="Kamimura N."/>
            <person name="Mori T."/>
            <person name="Nakabayashi R."/>
            <person name="Tsuji Y."/>
            <person name="Hishiyama S."/>
            <person name="Saito K."/>
            <person name="Masai E."/>
            <person name="Kajita S."/>
        </authorList>
    </citation>
    <scope>FUNCTION</scope>
    <scope>CATALYTIC ACTIVITY</scope>
    <scope>BIOPHYSICOCHEMICAL PROPERTIES</scope>
    <scope>TISSUE SPECIFICITY</scope>
    <scope>INDUCTION BY WOUNDING</scope>
</reference>
<keyword id="KW-0521">NADP</keyword>
<keyword id="KW-0560">Oxidoreductase</keyword>
<keyword id="KW-1185">Reference proteome</keyword>
<dbReference type="EC" id="1.23.1.-" evidence="2"/>
<dbReference type="EMBL" id="AL050351">
    <property type="protein sequence ID" value="CAB43638.1"/>
    <property type="molecule type" value="Genomic_DNA"/>
</dbReference>
<dbReference type="EMBL" id="AL161594">
    <property type="protein sequence ID" value="CAB80586.1"/>
    <property type="molecule type" value="Genomic_DNA"/>
</dbReference>
<dbReference type="EMBL" id="CP002687">
    <property type="protein sequence ID" value="AEE87040.1"/>
    <property type="molecule type" value="Genomic_DNA"/>
</dbReference>
<dbReference type="EMBL" id="AY150409">
    <property type="protein sequence ID" value="AAN12954.1"/>
    <property type="molecule type" value="mRNA"/>
</dbReference>
<dbReference type="EMBL" id="AY080705">
    <property type="protein sequence ID" value="AAL85023.1"/>
    <property type="molecule type" value="mRNA"/>
</dbReference>
<dbReference type="PIR" id="T08571">
    <property type="entry name" value="T08571"/>
</dbReference>
<dbReference type="RefSeq" id="NP_195634.1">
    <property type="nucleotide sequence ID" value="NM_120083.5"/>
</dbReference>
<dbReference type="SMR" id="Q9T030"/>
<dbReference type="FunCoup" id="Q9T030">
    <property type="interactions" value="116"/>
</dbReference>
<dbReference type="STRING" id="3702.Q9T030"/>
<dbReference type="iPTMnet" id="Q9T030"/>
<dbReference type="PaxDb" id="3702-AT4G39230.1"/>
<dbReference type="ProteomicsDB" id="236440"/>
<dbReference type="EnsemblPlants" id="AT4G39230.1">
    <property type="protein sequence ID" value="AT4G39230.1"/>
    <property type="gene ID" value="AT4G39230"/>
</dbReference>
<dbReference type="GeneID" id="830078"/>
<dbReference type="Gramene" id="AT4G39230.1">
    <property type="protein sequence ID" value="AT4G39230.1"/>
    <property type="gene ID" value="AT4G39230"/>
</dbReference>
<dbReference type="KEGG" id="ath:AT4G39230"/>
<dbReference type="Araport" id="AT4G39230"/>
<dbReference type="TAIR" id="AT4G39230">
    <property type="gene designation" value="PCBER1"/>
</dbReference>
<dbReference type="eggNOG" id="ENOG502QPMY">
    <property type="taxonomic scope" value="Eukaryota"/>
</dbReference>
<dbReference type="HOGENOM" id="CLU_060833_0_1_1"/>
<dbReference type="InParanoid" id="Q9T030"/>
<dbReference type="OMA" id="AHEKPHQ"/>
<dbReference type="OrthoDB" id="419598at2759"/>
<dbReference type="PhylomeDB" id="Q9T030"/>
<dbReference type="BioCyc" id="ARA:AT4G39230-MONOMER"/>
<dbReference type="PRO" id="PR:Q9T030"/>
<dbReference type="Proteomes" id="UP000006548">
    <property type="component" value="Chromosome 4"/>
</dbReference>
<dbReference type="ExpressionAtlas" id="Q9T030">
    <property type="expression patterns" value="baseline and differential"/>
</dbReference>
<dbReference type="GO" id="GO:0050664">
    <property type="term" value="F:oxidoreductase activity, acting on NAD(P)H, oxygen as acceptor"/>
    <property type="evidence" value="ECO:0000314"/>
    <property type="project" value="UniProtKB"/>
</dbReference>
<dbReference type="GO" id="GO:0009807">
    <property type="term" value="P:lignan biosynthetic process"/>
    <property type="evidence" value="ECO:0000314"/>
    <property type="project" value="UniProtKB"/>
</dbReference>
<dbReference type="CDD" id="cd05259">
    <property type="entry name" value="PCBER_SDR_a"/>
    <property type="match status" value="1"/>
</dbReference>
<dbReference type="Gene3D" id="3.40.50.720">
    <property type="entry name" value="NAD(P)-binding Rossmann-like Domain"/>
    <property type="match status" value="1"/>
</dbReference>
<dbReference type="Gene3D" id="3.90.25.10">
    <property type="entry name" value="UDP-galactose 4-epimerase, domain 1"/>
    <property type="match status" value="1"/>
</dbReference>
<dbReference type="InterPro" id="IPR036291">
    <property type="entry name" value="NAD(P)-bd_dom_sf"/>
</dbReference>
<dbReference type="InterPro" id="IPR008030">
    <property type="entry name" value="NmrA-like"/>
</dbReference>
<dbReference type="InterPro" id="IPR050608">
    <property type="entry name" value="NmrA-type/Isoflavone_red_sf"/>
</dbReference>
<dbReference type="InterPro" id="IPR045312">
    <property type="entry name" value="PCBER-like"/>
</dbReference>
<dbReference type="PANTHER" id="PTHR43349:SF35">
    <property type="entry name" value="PHENYLCOUMARAN BENZYLIC ETHER REDUCTASE 1"/>
    <property type="match status" value="1"/>
</dbReference>
<dbReference type="PANTHER" id="PTHR43349">
    <property type="entry name" value="PINORESINOL REDUCTASE-RELATED"/>
    <property type="match status" value="1"/>
</dbReference>
<dbReference type="Pfam" id="PF05368">
    <property type="entry name" value="NmrA"/>
    <property type="match status" value="1"/>
</dbReference>
<dbReference type="SUPFAM" id="SSF51735">
    <property type="entry name" value="NAD(P)-binding Rossmann-fold domains"/>
    <property type="match status" value="1"/>
</dbReference>
<feature type="chain" id="PRO_0000442615" description="Phenylcoumaran benzylic ether reductase 1">
    <location>
        <begin position="1"/>
        <end position="308"/>
    </location>
</feature>
<feature type="active site" description="Proton acceptor" evidence="1">
    <location>
        <position position="133"/>
    </location>
</feature>
<feature type="binding site" evidence="1">
    <location>
        <begin position="11"/>
        <end position="17"/>
    </location>
    <ligand>
        <name>NADP(+)</name>
        <dbReference type="ChEBI" id="CHEBI:58349"/>
    </ligand>
</feature>
<feature type="binding site" evidence="1">
    <location>
        <position position="36"/>
    </location>
    <ligand>
        <name>NADP(+)</name>
        <dbReference type="ChEBI" id="CHEBI:58349"/>
    </ligand>
</feature>
<feature type="binding site" evidence="1">
    <location>
        <position position="45"/>
    </location>
    <ligand>
        <name>NADP(+)</name>
        <dbReference type="ChEBI" id="CHEBI:58349"/>
    </ligand>
</feature>
<feature type="binding site" evidence="1">
    <location>
        <position position="137"/>
    </location>
    <ligand>
        <name>NADP(+)</name>
        <dbReference type="ChEBI" id="CHEBI:58349"/>
    </ligand>
</feature>
<feature type="sequence conflict" description="In Ref. 3; AAL85023." evidence="4" ref="3">
    <original>Q</original>
    <variation>R</variation>
    <location>
        <position position="165"/>
    </location>
</feature>